<gene>
    <name evidence="1" type="primary">symE</name>
    <name type="ordered locus">Ecok1_43640</name>
    <name type="ORF">APECO1_2079</name>
</gene>
<comment type="function">
    <text evidence="1">Involved in the degradation and recycling of damaged RNA. It is itself a target for degradation by the ATP-dependent protease Lon.</text>
</comment>
<comment type="subcellular location">
    <subcellularLocation>
        <location evidence="1">Cytoplasm</location>
    </subcellularLocation>
</comment>
<comment type="similarity">
    <text evidence="1">Belongs to the SymE family.</text>
</comment>
<comment type="sequence caution" evidence="3">
    <conflict type="erroneous initiation">
        <sequence resource="EMBL-CDS" id="ABJ03858"/>
    </conflict>
</comment>
<feature type="chain" id="PRO_0000297819" description="Endoribonuclease SymE">
    <location>
        <begin position="1"/>
        <end position="113"/>
    </location>
</feature>
<feature type="domain" description="SpoVT-AbrB" evidence="2">
    <location>
        <begin position="29"/>
        <end position="74"/>
    </location>
</feature>
<keyword id="KW-0963">Cytoplasm</keyword>
<keyword id="KW-0238">DNA-binding</keyword>
<keyword id="KW-0255">Endonuclease</keyword>
<keyword id="KW-0378">Hydrolase</keyword>
<keyword id="KW-0540">Nuclease</keyword>
<keyword id="KW-1185">Reference proteome</keyword>
<keyword id="KW-0694">RNA-binding</keyword>
<sequence>MTDTHSIAQPFEAEVSPANNRQLTVSYASRYPDYSRIPAITLKGQWLEAAGFATGTAIDVKVMEGCIVLTAQPPAAEESELMQSLRQVCKLSARKQRQVQEFIGVIAGKQKVA</sequence>
<reference key="1">
    <citation type="journal article" date="2007" name="J. Bacteriol.">
        <title>The genome sequence of avian pathogenic Escherichia coli strain O1:K1:H7 shares strong similarities with human extraintestinal pathogenic E. coli genomes.</title>
        <authorList>
            <person name="Johnson T.J."/>
            <person name="Kariyawasam S."/>
            <person name="Wannemuehler Y."/>
            <person name="Mangiamele P."/>
            <person name="Johnson S.J."/>
            <person name="Doetkott C."/>
            <person name="Skyberg J.A."/>
            <person name="Lynne A.M."/>
            <person name="Johnson J.R."/>
            <person name="Nolan L.K."/>
        </authorList>
    </citation>
    <scope>NUCLEOTIDE SEQUENCE [LARGE SCALE GENOMIC DNA]</scope>
</reference>
<name>SYME_ECOK1</name>
<protein>
    <recommendedName>
        <fullName evidence="1">Endoribonuclease SymE</fullName>
        <ecNumber evidence="1">3.1.-.-</ecNumber>
    </recommendedName>
</protein>
<dbReference type="EC" id="3.1.-.-" evidence="1"/>
<dbReference type="EMBL" id="CP000468">
    <property type="protein sequence ID" value="ABJ03858.1"/>
    <property type="status" value="ALT_INIT"/>
    <property type="molecule type" value="Genomic_DNA"/>
</dbReference>
<dbReference type="RefSeq" id="WP_000132612.1">
    <property type="nucleotide sequence ID" value="NZ_CADILS010000050.1"/>
</dbReference>
<dbReference type="KEGG" id="ecv:APECO1_2079"/>
<dbReference type="HOGENOM" id="CLU_151239_0_0_6"/>
<dbReference type="Proteomes" id="UP000008216">
    <property type="component" value="Chromosome"/>
</dbReference>
<dbReference type="GO" id="GO:0005737">
    <property type="term" value="C:cytoplasm"/>
    <property type="evidence" value="ECO:0007669"/>
    <property type="project" value="UniProtKB-SubCell"/>
</dbReference>
<dbReference type="GO" id="GO:0003677">
    <property type="term" value="F:DNA binding"/>
    <property type="evidence" value="ECO:0007669"/>
    <property type="project" value="UniProtKB-KW"/>
</dbReference>
<dbReference type="GO" id="GO:0003723">
    <property type="term" value="F:RNA binding"/>
    <property type="evidence" value="ECO:0007669"/>
    <property type="project" value="UniProtKB-KW"/>
</dbReference>
<dbReference type="GO" id="GO:0004521">
    <property type="term" value="F:RNA endonuclease activity"/>
    <property type="evidence" value="ECO:0007669"/>
    <property type="project" value="UniProtKB-UniRule"/>
</dbReference>
<dbReference type="GO" id="GO:0016070">
    <property type="term" value="P:RNA metabolic process"/>
    <property type="evidence" value="ECO:0007669"/>
    <property type="project" value="InterPro"/>
</dbReference>
<dbReference type="HAMAP" id="MF_01193">
    <property type="entry name" value="Endoribonucl_SymE"/>
    <property type="match status" value="1"/>
</dbReference>
<dbReference type="InterPro" id="IPR007159">
    <property type="entry name" value="SpoVT-AbrB_dom"/>
</dbReference>
<dbReference type="InterPro" id="IPR014944">
    <property type="entry name" value="Toxin_SymE-like"/>
</dbReference>
<dbReference type="InterPro" id="IPR020883">
    <property type="entry name" value="TypeI_TA_SymE"/>
</dbReference>
<dbReference type="NCBIfam" id="NF010128">
    <property type="entry name" value="PRK13605.1"/>
    <property type="match status" value="1"/>
</dbReference>
<dbReference type="Pfam" id="PF08845">
    <property type="entry name" value="SymE_toxin"/>
    <property type="match status" value="1"/>
</dbReference>
<dbReference type="PROSITE" id="PS51740">
    <property type="entry name" value="SPOVT_ABRB"/>
    <property type="match status" value="1"/>
</dbReference>
<evidence type="ECO:0000255" key="1">
    <source>
        <dbReference type="HAMAP-Rule" id="MF_01193"/>
    </source>
</evidence>
<evidence type="ECO:0000255" key="2">
    <source>
        <dbReference type="PROSITE-ProRule" id="PRU01076"/>
    </source>
</evidence>
<evidence type="ECO:0000305" key="3"/>
<organism>
    <name type="scientific">Escherichia coli O1:K1 / APEC</name>
    <dbReference type="NCBI Taxonomy" id="405955"/>
    <lineage>
        <taxon>Bacteria</taxon>
        <taxon>Pseudomonadati</taxon>
        <taxon>Pseudomonadota</taxon>
        <taxon>Gammaproteobacteria</taxon>
        <taxon>Enterobacterales</taxon>
        <taxon>Enterobacteriaceae</taxon>
        <taxon>Escherichia</taxon>
    </lineage>
</organism>
<accession>A1AJL8</accession>
<proteinExistence type="inferred from homology"/>